<dbReference type="EMBL" id="U83895">
    <property type="protein sequence ID" value="AAB41443.1"/>
    <property type="molecule type" value="mRNA"/>
</dbReference>
<dbReference type="RefSeq" id="NP_446362.1">
    <property type="nucleotide sequence ID" value="NM_053910.1"/>
</dbReference>
<dbReference type="SMR" id="P97694"/>
<dbReference type="BioGRID" id="250573">
    <property type="interactions" value="1"/>
</dbReference>
<dbReference type="FunCoup" id="P97694">
    <property type="interactions" value="2927"/>
</dbReference>
<dbReference type="STRING" id="10116.ENSRNOP00000004196"/>
<dbReference type="iPTMnet" id="P97694"/>
<dbReference type="PhosphoSitePlus" id="P97694"/>
<dbReference type="jPOST" id="P97694"/>
<dbReference type="PaxDb" id="10116-ENSRNOP00000004196"/>
<dbReference type="Ensembl" id="ENSRNOT00000004196.7">
    <property type="protein sequence ID" value="ENSRNOP00000004196.6"/>
    <property type="gene ID" value="ENSRNOG00000043381.4"/>
</dbReference>
<dbReference type="GeneID" id="116691"/>
<dbReference type="KEGG" id="rno:116691"/>
<dbReference type="UCSC" id="RGD:620397">
    <property type="organism name" value="rat"/>
</dbReference>
<dbReference type="AGR" id="RGD:620397"/>
<dbReference type="CTD" id="9267"/>
<dbReference type="RGD" id="620397">
    <property type="gene designation" value="Cyth1"/>
</dbReference>
<dbReference type="eggNOG" id="KOG0930">
    <property type="taxonomic scope" value="Eukaryota"/>
</dbReference>
<dbReference type="GeneTree" id="ENSGT00940000157519"/>
<dbReference type="InParanoid" id="P97694"/>
<dbReference type="OrthoDB" id="8162at9989"/>
<dbReference type="PhylomeDB" id="P97694"/>
<dbReference type="Reactome" id="R-RNO-6811438">
    <property type="pathway name" value="Intra-Golgi traffic"/>
</dbReference>
<dbReference type="PRO" id="PR:P97694"/>
<dbReference type="Proteomes" id="UP000002494">
    <property type="component" value="Chromosome 10"/>
</dbReference>
<dbReference type="GO" id="GO:0005912">
    <property type="term" value="C:adherens junction"/>
    <property type="evidence" value="ECO:0007669"/>
    <property type="project" value="UniProtKB-SubCell"/>
</dbReference>
<dbReference type="GO" id="GO:0005923">
    <property type="term" value="C:bicellular tight junction"/>
    <property type="evidence" value="ECO:0000250"/>
    <property type="project" value="UniProtKB"/>
</dbReference>
<dbReference type="GO" id="GO:0005737">
    <property type="term" value="C:cytoplasm"/>
    <property type="evidence" value="ECO:0000266"/>
    <property type="project" value="RGD"/>
</dbReference>
<dbReference type="GO" id="GO:0009898">
    <property type="term" value="C:cytoplasmic side of plasma membrane"/>
    <property type="evidence" value="ECO:0000250"/>
    <property type="project" value="UniProtKB"/>
</dbReference>
<dbReference type="GO" id="GO:0005829">
    <property type="term" value="C:cytosol"/>
    <property type="evidence" value="ECO:0000250"/>
    <property type="project" value="UniProtKB"/>
</dbReference>
<dbReference type="GO" id="GO:0098888">
    <property type="term" value="C:extrinsic component of presynaptic membrane"/>
    <property type="evidence" value="ECO:0000314"/>
    <property type="project" value="SynGO"/>
</dbReference>
<dbReference type="GO" id="GO:0031594">
    <property type="term" value="C:neuromuscular junction"/>
    <property type="evidence" value="ECO:0000314"/>
    <property type="project" value="SynGO"/>
</dbReference>
<dbReference type="GO" id="GO:0005886">
    <property type="term" value="C:plasma membrane"/>
    <property type="evidence" value="ECO:0000250"/>
    <property type="project" value="UniProtKB"/>
</dbReference>
<dbReference type="GO" id="GO:0005085">
    <property type="term" value="F:guanyl-nucleotide exchange factor activity"/>
    <property type="evidence" value="ECO:0000250"/>
    <property type="project" value="UniProtKB"/>
</dbReference>
<dbReference type="GO" id="GO:0008289">
    <property type="term" value="F:lipid binding"/>
    <property type="evidence" value="ECO:0007669"/>
    <property type="project" value="UniProtKB-KW"/>
</dbReference>
<dbReference type="GO" id="GO:0090162">
    <property type="term" value="P:establishment of epithelial cell polarity"/>
    <property type="evidence" value="ECO:0000250"/>
    <property type="project" value="UniProtKB"/>
</dbReference>
<dbReference type="GO" id="GO:0099171">
    <property type="term" value="P:presynaptic modulation of chemical synaptic transmission"/>
    <property type="evidence" value="ECO:0000314"/>
    <property type="project" value="SynGO"/>
</dbReference>
<dbReference type="GO" id="GO:0032012">
    <property type="term" value="P:regulation of ARF protein signal transduction"/>
    <property type="evidence" value="ECO:0007669"/>
    <property type="project" value="InterPro"/>
</dbReference>
<dbReference type="GO" id="GO:0030155">
    <property type="term" value="P:regulation of cell adhesion"/>
    <property type="evidence" value="ECO:0000266"/>
    <property type="project" value="RGD"/>
</dbReference>
<dbReference type="CDD" id="cd01252">
    <property type="entry name" value="PH_GRP1-like"/>
    <property type="match status" value="1"/>
</dbReference>
<dbReference type="CDD" id="cd00171">
    <property type="entry name" value="Sec7"/>
    <property type="match status" value="1"/>
</dbReference>
<dbReference type="FunFam" id="1.10.1000.11:FF:000002">
    <property type="entry name" value="Cytohesin 1"/>
    <property type="match status" value="1"/>
</dbReference>
<dbReference type="FunFam" id="1.10.220.20:FF:000003">
    <property type="entry name" value="Cytohesin 1"/>
    <property type="match status" value="1"/>
</dbReference>
<dbReference type="FunFam" id="2.30.29.30:FF:000009">
    <property type="entry name" value="Cytohesin 1"/>
    <property type="match status" value="1"/>
</dbReference>
<dbReference type="Gene3D" id="1.10.220.20">
    <property type="match status" value="1"/>
</dbReference>
<dbReference type="Gene3D" id="1.10.1000.11">
    <property type="entry name" value="Arf Nucleotide-binding Site Opener,domain 2"/>
    <property type="match status" value="1"/>
</dbReference>
<dbReference type="Gene3D" id="2.30.29.30">
    <property type="entry name" value="Pleckstrin-homology domain (PH domain)/Phosphotyrosine-binding domain (PTB)"/>
    <property type="match status" value="1"/>
</dbReference>
<dbReference type="InterPro" id="IPR011993">
    <property type="entry name" value="PH-like_dom_sf"/>
</dbReference>
<dbReference type="InterPro" id="IPR001849">
    <property type="entry name" value="PH_domain"/>
</dbReference>
<dbReference type="InterPro" id="IPR023394">
    <property type="entry name" value="Sec7_C_sf"/>
</dbReference>
<dbReference type="InterPro" id="IPR000904">
    <property type="entry name" value="Sec7_dom"/>
</dbReference>
<dbReference type="InterPro" id="IPR035999">
    <property type="entry name" value="Sec7_dom_sf"/>
</dbReference>
<dbReference type="PANTHER" id="PTHR10663:SF340">
    <property type="entry name" value="CYTOHESIN-1"/>
    <property type="match status" value="1"/>
</dbReference>
<dbReference type="PANTHER" id="PTHR10663">
    <property type="entry name" value="GUANYL-NUCLEOTIDE EXCHANGE FACTOR"/>
    <property type="match status" value="1"/>
</dbReference>
<dbReference type="Pfam" id="PF00169">
    <property type="entry name" value="PH"/>
    <property type="match status" value="1"/>
</dbReference>
<dbReference type="Pfam" id="PF01369">
    <property type="entry name" value="Sec7"/>
    <property type="match status" value="1"/>
</dbReference>
<dbReference type="SMART" id="SM00233">
    <property type="entry name" value="PH"/>
    <property type="match status" value="1"/>
</dbReference>
<dbReference type="SMART" id="SM00222">
    <property type="entry name" value="Sec7"/>
    <property type="match status" value="1"/>
</dbReference>
<dbReference type="SUPFAM" id="SSF50729">
    <property type="entry name" value="PH domain-like"/>
    <property type="match status" value="1"/>
</dbReference>
<dbReference type="SUPFAM" id="SSF48425">
    <property type="entry name" value="Sec7 domain"/>
    <property type="match status" value="1"/>
</dbReference>
<dbReference type="PROSITE" id="PS50003">
    <property type="entry name" value="PH_DOMAIN"/>
    <property type="match status" value="1"/>
</dbReference>
<dbReference type="PROSITE" id="PS50190">
    <property type="entry name" value="SEC7"/>
    <property type="match status" value="1"/>
</dbReference>
<keyword id="KW-0007">Acetylation</keyword>
<keyword id="KW-0965">Cell junction</keyword>
<keyword id="KW-1003">Cell membrane</keyword>
<keyword id="KW-0175">Coiled coil</keyword>
<keyword id="KW-0963">Cytoplasm</keyword>
<keyword id="KW-0344">Guanine-nucleotide releasing factor</keyword>
<keyword id="KW-0446">Lipid-binding</keyword>
<keyword id="KW-0472">Membrane</keyword>
<keyword id="KW-1185">Reference proteome</keyword>
<keyword id="KW-0796">Tight junction</keyword>
<keyword id="KW-0832">Ubl conjugation</keyword>
<comment type="function">
    <text evidence="3">Promotes guanine-nucleotide exchange on ARF1, ARF5 and ARF6. Promotes the activation of ARF factors through replacement of GDP with GTP. Plays an important role in membrane trafficking, during junctional remodeling and epithelial polarization, through regulation of ARF6 activity.</text>
</comment>
<comment type="subunit">
    <text evidence="2 3">Interacts with TRIM23 and CYTIP (By similarity). Interacts (via coiled-coil domain) with FRMD4A (via coiled-coil domain) (By similarity). Interacts with FRMD4B (By similarity). Found in a complex with PARD3, CYTH1 and FRMD4A (By similarity). Interacts (via N-terminal domain) with INAVA (via N-terminal domain) (By similarity).</text>
</comment>
<comment type="subcellular location">
    <subcellularLocation>
        <location evidence="3">Cell membrane</location>
        <topology evidence="3">Peripheral membrane protein</topology>
    </subcellularLocation>
    <subcellularLocation>
        <location evidence="3">Cytoplasm</location>
        <location evidence="3">Cytosol</location>
    </subcellularLocation>
    <subcellularLocation>
        <location evidence="3">Cell junction</location>
        <location evidence="3">Tight junction</location>
    </subcellularLocation>
    <subcellularLocation>
        <location evidence="3">Cell junction</location>
        <location evidence="3">Adherens junction</location>
    </subcellularLocation>
    <text evidence="3">Colocalized with TJP1 during epithelial polarization.</text>
</comment>
<comment type="tissue specificity">
    <text>Present in all tissues tested, with highest protein levels in brain and adrenal.</text>
</comment>
<comment type="developmental stage">
    <text evidence="7">On embryonic days 15 (15 dpc) and 18 dpc, expression is seen in the mantle and ventricular germinal zones throughout the neuraxis. On postnatal days 0 (P0) and P7, expression is seen in the cerebral neocortex, olfactory mitral and granule cell layers, hippocampal pyramidal and dentate granule cells and the striatum. A lower expression is seen in gray matter in di-, mes- and met-encephali. In the cerebellum, the expression is evident in the external and internal granule cell layers and Purkinje cell layer. On P14, a decreased expression is seen in the di-, mes- and met-encephali. On P21 and thereafter, expression is seen in the olfactory mitral and granule cells, dentate granule cells and the cerebellar granule cells and Purkinje cells.</text>
</comment>
<comment type="domain">
    <text evidence="1">Binds via its PH domain to the inositol head group of phosphatidylinositol 3,4,5-trisphosphate.</text>
</comment>
<comment type="domain">
    <text evidence="3">Autoinhibited by its C-terminal basic region.</text>
</comment>
<comment type="PTM">
    <text evidence="2">Ubiquitinated by SCF(FBXW11) E3 ubiquitin-protein ligase complex. Ubiquitination induces proteasomal degradation.</text>
</comment>
<organism>
    <name type="scientific">Rattus norvegicus</name>
    <name type="common">Rat</name>
    <dbReference type="NCBI Taxonomy" id="10116"/>
    <lineage>
        <taxon>Eukaryota</taxon>
        <taxon>Metazoa</taxon>
        <taxon>Chordata</taxon>
        <taxon>Craniata</taxon>
        <taxon>Vertebrata</taxon>
        <taxon>Euteleostomi</taxon>
        <taxon>Mammalia</taxon>
        <taxon>Eutheria</taxon>
        <taxon>Euarchontoglires</taxon>
        <taxon>Glires</taxon>
        <taxon>Rodentia</taxon>
        <taxon>Myomorpha</taxon>
        <taxon>Muroidea</taxon>
        <taxon>Muridae</taxon>
        <taxon>Murinae</taxon>
        <taxon>Rattus</taxon>
    </lineage>
</organism>
<sequence>MEDDDSYVPSDLTAEERQELENIRRRKQELLADIQRLKEEIAEVANEIESLGSTEERKNMQRNKQVAMGRKKFNMDPKKGIQFLIENGLLKNTCEDIAQFLYKGEGLNKTAIGDYLGERDEFSIQVLHAFVELHEFTDLNLVQALRQFLWSFRLPGEAQKIDRMMEAFAQRYCQCNTGVFQSTDTCYVLSFAIIMLNTSLHNPNVKDKPTVERFIAMNRGINDGGDLPEELLRNLYESIKNEPFKIPEDDGNDLTHTFFNPDREGWLLKLGGGRVKTWKRRWFILTDNCLYYFEYTTDKEPRGIIPLENLSIREVEDSKKPNCFELYIPDNKDQVIKACKTEADGRVVEGNHTVYRISAPTPEEKEDWIKCIKAAISRDPFYEMLAARKKKVSSTKRH</sequence>
<evidence type="ECO:0000250" key="1"/>
<evidence type="ECO:0000250" key="2">
    <source>
        <dbReference type="UniProtKB" id="Q15438"/>
    </source>
</evidence>
<evidence type="ECO:0000250" key="3">
    <source>
        <dbReference type="UniProtKB" id="Q9QX11"/>
    </source>
</evidence>
<evidence type="ECO:0000255" key="4"/>
<evidence type="ECO:0000255" key="5">
    <source>
        <dbReference type="PROSITE-ProRule" id="PRU00145"/>
    </source>
</evidence>
<evidence type="ECO:0000255" key="6">
    <source>
        <dbReference type="PROSITE-ProRule" id="PRU00189"/>
    </source>
</evidence>
<evidence type="ECO:0000269" key="7">
    <source>
    </source>
</evidence>
<evidence type="ECO:0000269" key="8">
    <source>
    </source>
</evidence>
<reference key="1">
    <citation type="journal article" date="1997" name="Eur. J. Cell Biol.">
        <title>Rat homologues of yeast sec7p.</title>
        <authorList>
            <person name="Telemenakis I."/>
            <person name="Benseler F."/>
            <person name="Stenius K."/>
            <person name="Suedhof T.C."/>
            <person name="Brose N."/>
        </authorList>
    </citation>
    <scope>NUCLEOTIDE SEQUENCE [MRNA]</scope>
</reference>
<reference key="2">
    <citation type="journal article" date="1999" name="Proc. Natl. Acad. Sci. U.S.A.">
        <title>A presynaptic role for the ADP ribosylation factor (ARF)-specific GDP/GTP exchange factor msec7-1.</title>
        <authorList>
            <person name="Ashery U."/>
            <person name="Koch H."/>
            <person name="Scheuss V."/>
            <person name="Brose N."/>
            <person name="Rettig J."/>
        </authorList>
    </citation>
    <scope>CHARACTERIZATION</scope>
    <scope>MUTAGENESIS OF GLU-157</scope>
</reference>
<reference key="3">
    <citation type="journal article" date="2002" name="Brain Res. Mol. Brain Res.">
        <title>Localization of mRNAs for subfamily of guanine nucleotide-exchange proteins (GEP) for ARFs (ADP-ribosylation factors) in the brain of developing and mature rats under normal and postaxotomy conditions.</title>
        <authorList>
            <person name="Suzuki I."/>
            <person name="Owada Y."/>
            <person name="Suzuki R."/>
            <person name="Yoshimoto T."/>
            <person name="Kondo H."/>
        </authorList>
    </citation>
    <scope>DEVELOPMENTAL STAGE</scope>
</reference>
<accession>P97694</accession>
<protein>
    <recommendedName>
        <fullName>Cytohesin-1</fullName>
    </recommendedName>
    <alternativeName>
        <fullName>PH, SEC7 and coiled-coil domain-containing protein 1</fullName>
    </alternativeName>
    <alternativeName>
        <fullName>SEC7 homolog A</fullName>
        <shortName>rSec7-1</shortName>
    </alternativeName>
</protein>
<gene>
    <name type="primary">Cyth1</name>
    <name type="synonym">Pscd1</name>
    <name type="synonym">Sec7a</name>
</gene>
<proteinExistence type="evidence at protein level"/>
<feature type="chain" id="PRO_0000120196" description="Cytohesin-1">
    <location>
        <begin position="1"/>
        <end position="398"/>
    </location>
</feature>
<feature type="domain" description="SEC7" evidence="6">
    <location>
        <begin position="73"/>
        <end position="202"/>
    </location>
</feature>
<feature type="domain" description="PH" evidence="5">
    <location>
        <begin position="260"/>
        <end position="377"/>
    </location>
</feature>
<feature type="region of interest" description="C-terminal autoinhibitory region" evidence="1">
    <location>
        <begin position="388"/>
        <end position="396"/>
    </location>
</feature>
<feature type="coiled-coil region" evidence="4">
    <location>
        <begin position="10"/>
        <end position="67"/>
    </location>
</feature>
<feature type="binding site" evidence="1">
    <location>
        <begin position="269"/>
        <end position="277"/>
    </location>
    <ligand>
        <name>a 1,2-diacyl-sn-glycero-3-phospho-(1D-myo-inositol-3,4,5-trisphosphate)</name>
        <dbReference type="ChEBI" id="CHEBI:57836"/>
    </ligand>
</feature>
<feature type="binding site" evidence="1">
    <location>
        <position position="281"/>
    </location>
    <ligand>
        <name>a 1,2-diacyl-sn-glycero-3-phospho-(1D-myo-inositol-3,4,5-trisphosphate)</name>
        <dbReference type="ChEBI" id="CHEBI:57836"/>
    </ligand>
</feature>
<feature type="binding site" evidence="1">
    <location>
        <position position="292"/>
    </location>
    <ligand>
        <name>a 1,2-diacyl-sn-glycero-3-phospho-(1D-myo-inositol-3,4,5-trisphosphate)</name>
        <dbReference type="ChEBI" id="CHEBI:57836"/>
    </ligand>
</feature>
<feature type="binding site" evidence="1">
    <location>
        <position position="302"/>
    </location>
    <ligand>
        <name>a 1,2-diacyl-sn-glycero-3-phospho-(1D-myo-inositol-3,4,5-trisphosphate)</name>
        <dbReference type="ChEBI" id="CHEBI:57836"/>
    </ligand>
</feature>
<feature type="binding site" evidence="1">
    <location>
        <position position="351"/>
    </location>
    <ligand>
        <name>a 1,2-diacyl-sn-glycero-3-phospho-(1D-myo-inositol-3,4,5-trisphosphate)</name>
        <dbReference type="ChEBI" id="CHEBI:57836"/>
    </ligand>
</feature>
<feature type="modified residue" description="N-acetylmethionine" evidence="2">
    <location>
        <position position="1"/>
    </location>
</feature>
<feature type="mutagenesis site" description="Loss of ARF translocation." evidence="8">
    <original>E</original>
    <variation>K</variation>
    <location>
        <position position="157"/>
    </location>
</feature>
<name>CYH1_RAT</name>